<organism>
    <name type="scientific">Yersinia pseudotuberculosis serotype O:1b (strain IP 31758)</name>
    <dbReference type="NCBI Taxonomy" id="349747"/>
    <lineage>
        <taxon>Bacteria</taxon>
        <taxon>Pseudomonadati</taxon>
        <taxon>Pseudomonadota</taxon>
        <taxon>Gammaproteobacteria</taxon>
        <taxon>Enterobacterales</taxon>
        <taxon>Yersiniaceae</taxon>
        <taxon>Yersinia</taxon>
    </lineage>
</organism>
<accession>A7FMY9</accession>
<proteinExistence type="inferred from homology"/>
<dbReference type="EC" id="4.1.1.65" evidence="1"/>
<dbReference type="EMBL" id="CP000720">
    <property type="protein sequence ID" value="ABS48271.1"/>
    <property type="molecule type" value="Genomic_DNA"/>
</dbReference>
<dbReference type="SMR" id="A7FMY9"/>
<dbReference type="KEGG" id="ypi:YpsIP31758_3663"/>
<dbReference type="HOGENOM" id="CLU_029061_4_1_6"/>
<dbReference type="UniPathway" id="UPA00558">
    <property type="reaction ID" value="UER00616"/>
</dbReference>
<dbReference type="Proteomes" id="UP000002412">
    <property type="component" value="Chromosome"/>
</dbReference>
<dbReference type="GO" id="GO:0005886">
    <property type="term" value="C:plasma membrane"/>
    <property type="evidence" value="ECO:0007669"/>
    <property type="project" value="UniProtKB-SubCell"/>
</dbReference>
<dbReference type="GO" id="GO:0004609">
    <property type="term" value="F:phosphatidylserine decarboxylase activity"/>
    <property type="evidence" value="ECO:0007669"/>
    <property type="project" value="UniProtKB-UniRule"/>
</dbReference>
<dbReference type="GO" id="GO:0006646">
    <property type="term" value="P:phosphatidylethanolamine biosynthetic process"/>
    <property type="evidence" value="ECO:0007669"/>
    <property type="project" value="UniProtKB-UniRule"/>
</dbReference>
<dbReference type="HAMAP" id="MF_00662">
    <property type="entry name" value="PS_decarb_PSD_B_type1"/>
    <property type="match status" value="1"/>
</dbReference>
<dbReference type="InterPro" id="IPR003817">
    <property type="entry name" value="PS_Dcarbxylase"/>
</dbReference>
<dbReference type="InterPro" id="IPR033177">
    <property type="entry name" value="PSD-B"/>
</dbReference>
<dbReference type="InterPro" id="IPR033178">
    <property type="entry name" value="PSD_type1_pro"/>
</dbReference>
<dbReference type="NCBIfam" id="TIGR00163">
    <property type="entry name" value="PS_decarb"/>
    <property type="match status" value="1"/>
</dbReference>
<dbReference type="PANTHER" id="PTHR10067">
    <property type="entry name" value="PHOSPHATIDYLSERINE DECARBOXYLASE"/>
    <property type="match status" value="1"/>
</dbReference>
<dbReference type="PANTHER" id="PTHR10067:SF6">
    <property type="entry name" value="PHOSPHATIDYLSERINE DECARBOXYLASE PROENZYME, MITOCHONDRIAL"/>
    <property type="match status" value="1"/>
</dbReference>
<dbReference type="Pfam" id="PF02666">
    <property type="entry name" value="PS_Dcarbxylase"/>
    <property type="match status" value="1"/>
</dbReference>
<reference key="1">
    <citation type="journal article" date="2007" name="PLoS Genet.">
        <title>The complete genome sequence of Yersinia pseudotuberculosis IP31758, the causative agent of Far East scarlet-like fever.</title>
        <authorList>
            <person name="Eppinger M."/>
            <person name="Rosovitz M.J."/>
            <person name="Fricke W.F."/>
            <person name="Rasko D.A."/>
            <person name="Kokorina G."/>
            <person name="Fayolle C."/>
            <person name="Lindler L.E."/>
            <person name="Carniel E."/>
            <person name="Ravel J."/>
        </authorList>
    </citation>
    <scope>NUCLEOTIDE SEQUENCE [LARGE SCALE GENOMIC DNA]</scope>
    <source>
        <strain>IP 31758</strain>
    </source>
</reference>
<gene>
    <name evidence="1" type="primary">psd</name>
    <name type="ordered locus">YpsIP31758_3663</name>
</gene>
<protein>
    <recommendedName>
        <fullName evidence="1">Phosphatidylserine decarboxylase proenzyme</fullName>
        <ecNumber evidence="1">4.1.1.65</ecNumber>
    </recommendedName>
    <component>
        <recommendedName>
            <fullName evidence="1">Phosphatidylserine decarboxylase alpha chain</fullName>
        </recommendedName>
    </component>
    <component>
        <recommendedName>
            <fullName evidence="1">Phosphatidylserine decarboxylase beta chain</fullName>
        </recommendedName>
    </component>
</protein>
<evidence type="ECO:0000255" key="1">
    <source>
        <dbReference type="HAMAP-Rule" id="MF_00662"/>
    </source>
</evidence>
<feature type="chain" id="PRO_1000061924" description="Phosphatidylserine decarboxylase beta chain" evidence="1">
    <location>
        <begin position="1"/>
        <end position="253"/>
    </location>
</feature>
<feature type="chain" id="PRO_1000061925" description="Phosphatidylserine decarboxylase alpha chain" evidence="1">
    <location>
        <begin position="254"/>
        <end position="293"/>
    </location>
</feature>
<feature type="active site" description="Charge relay system; for autoendoproteolytic cleavage activity" evidence="1">
    <location>
        <position position="90"/>
    </location>
</feature>
<feature type="active site" description="Charge relay system; for autoendoproteolytic cleavage activity" evidence="1">
    <location>
        <position position="147"/>
    </location>
</feature>
<feature type="active site" description="Charge relay system; for autoendoproteolytic cleavage activity" evidence="1">
    <location>
        <position position="254"/>
    </location>
</feature>
<feature type="active site" description="Schiff-base intermediate with substrate; via pyruvic acid; for decarboxylase activity" evidence="1">
    <location>
        <position position="254"/>
    </location>
</feature>
<feature type="site" description="Cleavage (non-hydrolytic); by autocatalysis" evidence="1">
    <location>
        <begin position="253"/>
        <end position="254"/>
    </location>
</feature>
<feature type="modified residue" description="Pyruvic acid (Ser); by autocatalysis" evidence="1">
    <location>
        <position position="254"/>
    </location>
</feature>
<name>PSD_YERP3</name>
<sequence length="293" mass="32235">MLDSIKIKLQYLLPKQGLTQLAGWGANKQGGWLTQLVIKAFARYYKVDMKEAQDPEFSAYRTFNEFFVRPLRAGVRPVVAEENLLAQPADGAISQLGAIREGQILQAKGHNYSLEALLAGNYLLAAEFQNGQFVTTYLAPRDYHRVHMPCDGVLREMIYVPGDLFSVNPLTAANVPNLFARNERVICIFDTAFGPMAQILVGATIVGSIETVWAGTITPPREGVIRRWTYPQAGCEGAITLEKGQEMGRFKLGSTVINLFAEGKVYFAPQLNSGAVTRMGEVLAEAVPTTPSY</sequence>
<keyword id="KW-1003">Cell membrane</keyword>
<keyword id="KW-0210">Decarboxylase</keyword>
<keyword id="KW-0444">Lipid biosynthesis</keyword>
<keyword id="KW-0443">Lipid metabolism</keyword>
<keyword id="KW-0456">Lyase</keyword>
<keyword id="KW-0472">Membrane</keyword>
<keyword id="KW-0594">Phospholipid biosynthesis</keyword>
<keyword id="KW-1208">Phospholipid metabolism</keyword>
<keyword id="KW-0670">Pyruvate</keyword>
<keyword id="KW-0865">Zymogen</keyword>
<comment type="function">
    <text evidence="1">Catalyzes the formation of phosphatidylethanolamine (PtdEtn) from phosphatidylserine (PtdSer).</text>
</comment>
<comment type="catalytic activity">
    <reaction evidence="1">
        <text>a 1,2-diacyl-sn-glycero-3-phospho-L-serine + H(+) = a 1,2-diacyl-sn-glycero-3-phosphoethanolamine + CO2</text>
        <dbReference type="Rhea" id="RHEA:20828"/>
        <dbReference type="ChEBI" id="CHEBI:15378"/>
        <dbReference type="ChEBI" id="CHEBI:16526"/>
        <dbReference type="ChEBI" id="CHEBI:57262"/>
        <dbReference type="ChEBI" id="CHEBI:64612"/>
        <dbReference type="EC" id="4.1.1.65"/>
    </reaction>
</comment>
<comment type="cofactor">
    <cofactor evidence="1">
        <name>pyruvate</name>
        <dbReference type="ChEBI" id="CHEBI:15361"/>
    </cofactor>
    <text evidence="1">Binds 1 pyruvoyl group covalently per subunit.</text>
</comment>
<comment type="pathway">
    <text evidence="1">Phospholipid metabolism; phosphatidylethanolamine biosynthesis; phosphatidylethanolamine from CDP-diacylglycerol: step 2/2.</text>
</comment>
<comment type="subunit">
    <text evidence="1">Heterodimer of a large membrane-associated beta subunit and a small pyruvoyl-containing alpha subunit.</text>
</comment>
<comment type="subcellular location">
    <subcellularLocation>
        <location evidence="1">Cell membrane</location>
        <topology evidence="1">Peripheral membrane protein</topology>
    </subcellularLocation>
</comment>
<comment type="PTM">
    <text evidence="1">Is synthesized initially as an inactive proenzyme. Formation of the active enzyme involves a self-maturation process in which the active site pyruvoyl group is generated from an internal serine residue via an autocatalytic post-translational modification. Two non-identical subunits are generated from the proenzyme in this reaction, and the pyruvate is formed at the N-terminus of the alpha chain, which is derived from the carboxyl end of the proenzyme. The autoendoproteolytic cleavage occurs by a canonical serine protease mechanism, in which the side chain hydroxyl group of the serine supplies its oxygen atom to form the C-terminus of the beta chain, while the remainder of the serine residue undergoes an oxidative deamination to produce ammonia and the pyruvoyl prosthetic group on the alpha chain. During this reaction, the Ser that is part of the protease active site of the proenzyme becomes the pyruvoyl prosthetic group, which constitutes an essential element of the active site of the mature decarboxylase.</text>
</comment>
<comment type="similarity">
    <text evidence="1">Belongs to the phosphatidylserine decarboxylase family. PSD-B subfamily. Prokaryotic type I sub-subfamily.</text>
</comment>